<sequence length="1314" mass="142972">MPLRGVTALSDFRVEKLLQKAAALGLPEVKLSSEFWYFAGSEKALDAATVEKLQALLAAQSVEQTPEAREGLHLFLVTPRLGTISPWASKATNIAENCGLAGIERIERGMAVWLEGALTDEQKQQWAALLHDRMTESVLPDFQTASKLFHHLKSETFSTVDVLGGGKEALVKANTETGLALSADEIDYLVENYQALQRNPSDVELMMFAQANSEHCRHKIFNADFILNGEKQPKSLFGMIRDTHNAHPEGTVVAYKDNSSVIKGAKIERFYPNAAENQGYRFHEEDTHIIMKVETHNHPTAIAPFAGAATGAGGEIRDEGATGKGSRPKAGLTGFTVSNLNIPDLKQPWEQDYGKPEHISSPLDIMIEGPIGGAAFNNEFGRPNLLGYFRTFEEKFDGQVRGYHKPIMIAGGLGSIQAQQTHKDEIPEGALLIQLGGPGMLIGLGGGAASSMDTGTNDASLDFNSVQRGNPEIERRAQEVIDRCWQLGDQNPIISIHDVGAGGLSNAFPELVNDAGRGAVFELREVPLEEHGLTPLQIWCNESQERYVLSILEKDLDTFRAICERERCPFAVVGTATDDGHLKVRDDLFSNNPVDLPLNVLLGKPPKTTRTDKTVTPSKKPFHAGDIDITEAAYRVLRLPAVAAKNFLITIGDRSVGGMTHRDQMVGKYQTPVADCAVTMMGFNTYRGEAMSMGEKPAVALFDAPASGRMCVGEAITNIAAVNIGDIGNIKLSANWMAACGNEGEDEKLYRTVEAVSKACQALDLSIPVGKDSLSMKTVWQDGEEKKSVVSPLSLIISAFAPVKDVRKTVTPELKNVEGSVLLFIDLGFGKARMGGSAFGQVYNNMSGDAPDLDDAGRLKAFYSVIQQLVAEDKLLAYHDRSDGGLFATLAEMAFAARCGISADIDCLMDKFLPIHLPDFQGDPAEDLSDELYNHAAIKILFNEELGAVIQIRQKDRDYVDAAFETAGLTDAVSRIGSPDFDNEFISFFGYGYFLEQNRADLQRAWQETSHAIQRLRDNPACADSEFALIGDNERSALFADVKFDVNEDIAAPFINSGAKPKIAILREQGVNGQIEMAAAFTRAGFDAYDVHMSDLMAGRFRLADFKMLAACGGFSYGDVLGAGEGWAKSILFHPALRDQFAAFFADPNTLTLGVCNGCQMVSNLAEIIPGAETWPKFKRNLSEQFEARLNMVHVPKSASLILNEMQDSSLPVVVSHGEGRADFALHGGNISADLGIALQYVDGQNQVTQTYPLNPNGSPQGIAGITNADGRVTIMMPHPERVYRAAQMSRKPEGWTELSGWYRLFAGARKALG</sequence>
<feature type="chain" id="PRO_0000264582" description="Phosphoribosylformylglycinamidine synthase">
    <location>
        <begin position="1"/>
        <end position="1314"/>
    </location>
</feature>
<feature type="domain" description="Glutamine amidotransferase type-1" evidence="1">
    <location>
        <begin position="1063"/>
        <end position="1314"/>
    </location>
</feature>
<feature type="active site" description="Nucleophile" evidence="1">
    <location>
        <position position="1156"/>
    </location>
</feature>
<feature type="active site" evidence="1">
    <location>
        <position position="1279"/>
    </location>
</feature>
<feature type="active site" evidence="1">
    <location>
        <position position="1281"/>
    </location>
</feature>
<feature type="binding site" evidence="1">
    <location>
        <begin position="307"/>
        <end position="318"/>
    </location>
    <ligand>
        <name>ATP</name>
        <dbReference type="ChEBI" id="CHEBI:30616"/>
    </ligand>
</feature>
<feature type="binding site" evidence="1">
    <location>
        <position position="674"/>
    </location>
    <ligand>
        <name>ATP</name>
        <dbReference type="ChEBI" id="CHEBI:30616"/>
    </ligand>
</feature>
<feature type="binding site" evidence="1">
    <location>
        <position position="675"/>
    </location>
    <ligand>
        <name>Mg(2+)</name>
        <dbReference type="ChEBI" id="CHEBI:18420"/>
    </ligand>
</feature>
<feature type="binding site" evidence="1">
    <location>
        <position position="714"/>
    </location>
    <ligand>
        <name>Mg(2+)</name>
        <dbReference type="ChEBI" id="CHEBI:18420"/>
    </ligand>
</feature>
<feature type="binding site" evidence="1">
    <location>
        <position position="718"/>
    </location>
    <ligand>
        <name>Mg(2+)</name>
        <dbReference type="ChEBI" id="CHEBI:18420"/>
    </ligand>
</feature>
<feature type="binding site" evidence="1">
    <location>
        <position position="880"/>
    </location>
    <ligand>
        <name>Mg(2+)</name>
        <dbReference type="ChEBI" id="CHEBI:18420"/>
    </ligand>
</feature>
<feature type="binding site" evidence="1">
    <location>
        <position position="882"/>
    </location>
    <ligand>
        <name>ATP</name>
        <dbReference type="ChEBI" id="CHEBI:30616"/>
    </ligand>
</feature>
<keyword id="KW-0067">ATP-binding</keyword>
<keyword id="KW-0963">Cytoplasm</keyword>
<keyword id="KW-0315">Glutamine amidotransferase</keyword>
<keyword id="KW-0436">Ligase</keyword>
<keyword id="KW-0460">Magnesium</keyword>
<keyword id="KW-0479">Metal-binding</keyword>
<keyword id="KW-0547">Nucleotide-binding</keyword>
<keyword id="KW-0658">Purine biosynthesis</keyword>
<keyword id="KW-1185">Reference proteome</keyword>
<evidence type="ECO:0000255" key="1">
    <source>
        <dbReference type="HAMAP-Rule" id="MF_00419"/>
    </source>
</evidence>
<evidence type="ECO:0000305" key="2"/>
<proteinExistence type="inferred from homology"/>
<accession>Q5F7J4</accession>
<name>PUR4_NEIG1</name>
<comment type="function">
    <text evidence="1">Phosphoribosylformylglycinamidine synthase involved in the purines biosynthetic pathway. Catalyzes the ATP-dependent conversion of formylglycinamide ribonucleotide (FGAR) and glutamine to yield formylglycinamidine ribonucleotide (FGAM) and glutamate.</text>
</comment>
<comment type="catalytic activity">
    <reaction evidence="1">
        <text>N(2)-formyl-N(1)-(5-phospho-beta-D-ribosyl)glycinamide + L-glutamine + ATP + H2O = 2-formamido-N(1)-(5-O-phospho-beta-D-ribosyl)acetamidine + L-glutamate + ADP + phosphate + H(+)</text>
        <dbReference type="Rhea" id="RHEA:17129"/>
        <dbReference type="ChEBI" id="CHEBI:15377"/>
        <dbReference type="ChEBI" id="CHEBI:15378"/>
        <dbReference type="ChEBI" id="CHEBI:29985"/>
        <dbReference type="ChEBI" id="CHEBI:30616"/>
        <dbReference type="ChEBI" id="CHEBI:43474"/>
        <dbReference type="ChEBI" id="CHEBI:58359"/>
        <dbReference type="ChEBI" id="CHEBI:147286"/>
        <dbReference type="ChEBI" id="CHEBI:147287"/>
        <dbReference type="ChEBI" id="CHEBI:456216"/>
        <dbReference type="EC" id="6.3.5.3"/>
    </reaction>
</comment>
<comment type="pathway">
    <text evidence="1">Purine metabolism; IMP biosynthesis via de novo pathway; 5-amino-1-(5-phospho-D-ribosyl)imidazole from N(2)-formyl-N(1)-(5-phospho-D-ribosyl)glycinamide: step 1/2.</text>
</comment>
<comment type="subunit">
    <text evidence="1">Monomer.</text>
</comment>
<comment type="subcellular location">
    <subcellularLocation>
        <location evidence="1">Cytoplasm</location>
    </subcellularLocation>
</comment>
<comment type="similarity">
    <text evidence="1">In the N-terminal section; belongs to the FGAMS family.</text>
</comment>
<comment type="sequence caution" evidence="2">
    <conflict type="erroneous initiation">
        <sequence resource="EMBL-CDS" id="AAW89843"/>
    </conflict>
    <text>Extended N-terminus.</text>
</comment>
<protein>
    <recommendedName>
        <fullName evidence="1">Phosphoribosylformylglycinamidine synthase</fullName>
        <shortName evidence="1">FGAM synthase</shortName>
        <shortName evidence="1">FGAMS</shortName>
        <ecNumber evidence="1">6.3.5.3</ecNumber>
    </recommendedName>
    <alternativeName>
        <fullName evidence="1">Formylglycinamide ribonucleotide amidotransferase</fullName>
        <shortName evidence="1">FGAR amidotransferase</shortName>
        <shortName evidence="1">FGAR-AT</shortName>
    </alternativeName>
</protein>
<dbReference type="EC" id="6.3.5.3" evidence="1"/>
<dbReference type="EMBL" id="AE004969">
    <property type="protein sequence ID" value="AAW89843.1"/>
    <property type="status" value="ALT_INIT"/>
    <property type="molecule type" value="Genomic_DNA"/>
</dbReference>
<dbReference type="RefSeq" id="YP_208255.1">
    <property type="nucleotide sequence ID" value="NC_002946.2"/>
</dbReference>
<dbReference type="SMR" id="Q5F7J4"/>
<dbReference type="STRING" id="242231.NGO_1183"/>
<dbReference type="MEROPS" id="C56.972"/>
<dbReference type="KEGG" id="ngo:NGO_1183"/>
<dbReference type="PATRIC" id="fig|242231.10.peg.1390"/>
<dbReference type="HOGENOM" id="CLU_001031_0_2_4"/>
<dbReference type="UniPathway" id="UPA00074">
    <property type="reaction ID" value="UER00128"/>
</dbReference>
<dbReference type="Proteomes" id="UP000000535">
    <property type="component" value="Chromosome"/>
</dbReference>
<dbReference type="GO" id="GO:0005737">
    <property type="term" value="C:cytoplasm"/>
    <property type="evidence" value="ECO:0007669"/>
    <property type="project" value="UniProtKB-SubCell"/>
</dbReference>
<dbReference type="GO" id="GO:0005524">
    <property type="term" value="F:ATP binding"/>
    <property type="evidence" value="ECO:0007669"/>
    <property type="project" value="UniProtKB-UniRule"/>
</dbReference>
<dbReference type="GO" id="GO:0046872">
    <property type="term" value="F:metal ion binding"/>
    <property type="evidence" value="ECO:0007669"/>
    <property type="project" value="UniProtKB-KW"/>
</dbReference>
<dbReference type="GO" id="GO:0004642">
    <property type="term" value="F:phosphoribosylformylglycinamidine synthase activity"/>
    <property type="evidence" value="ECO:0007669"/>
    <property type="project" value="UniProtKB-UniRule"/>
</dbReference>
<dbReference type="GO" id="GO:0006189">
    <property type="term" value="P:'de novo' IMP biosynthetic process"/>
    <property type="evidence" value="ECO:0007669"/>
    <property type="project" value="UniProtKB-UniRule"/>
</dbReference>
<dbReference type="CDD" id="cd01740">
    <property type="entry name" value="GATase1_FGAR_AT"/>
    <property type="match status" value="1"/>
</dbReference>
<dbReference type="CDD" id="cd02203">
    <property type="entry name" value="PurL_repeat1"/>
    <property type="match status" value="1"/>
</dbReference>
<dbReference type="CDD" id="cd02204">
    <property type="entry name" value="PurL_repeat2"/>
    <property type="match status" value="1"/>
</dbReference>
<dbReference type="FunFam" id="1.10.8.750:FF:000002">
    <property type="entry name" value="Phosphoribosylformylglycinamidine synthase"/>
    <property type="match status" value="1"/>
</dbReference>
<dbReference type="FunFam" id="3.30.1330.10:FF:000002">
    <property type="entry name" value="Phosphoribosylformylglycinamidine synthase"/>
    <property type="match status" value="1"/>
</dbReference>
<dbReference type="FunFam" id="3.30.1330.10:FF:000005">
    <property type="entry name" value="Phosphoribosylformylglycinamidine synthase"/>
    <property type="match status" value="1"/>
</dbReference>
<dbReference type="FunFam" id="3.40.50.880:FF:000008">
    <property type="entry name" value="Phosphoribosylformylglycinamidine synthase"/>
    <property type="match status" value="1"/>
</dbReference>
<dbReference type="FunFam" id="3.90.650.10:FF:000002">
    <property type="entry name" value="Phosphoribosylformylglycinamidine synthase"/>
    <property type="match status" value="1"/>
</dbReference>
<dbReference type="Gene3D" id="3.40.50.880">
    <property type="match status" value="1"/>
</dbReference>
<dbReference type="Gene3D" id="1.10.8.750">
    <property type="entry name" value="Phosphoribosylformylglycinamidine synthase, linker domain"/>
    <property type="match status" value="1"/>
</dbReference>
<dbReference type="Gene3D" id="3.90.650.10">
    <property type="entry name" value="PurM-like C-terminal domain"/>
    <property type="match status" value="2"/>
</dbReference>
<dbReference type="Gene3D" id="3.30.1330.10">
    <property type="entry name" value="PurM-like, N-terminal domain"/>
    <property type="match status" value="2"/>
</dbReference>
<dbReference type="HAMAP" id="MF_00419">
    <property type="entry name" value="PurL_1"/>
    <property type="match status" value="1"/>
</dbReference>
<dbReference type="InterPro" id="IPR029062">
    <property type="entry name" value="Class_I_gatase-like"/>
</dbReference>
<dbReference type="InterPro" id="IPR040707">
    <property type="entry name" value="FGAR-AT_N"/>
</dbReference>
<dbReference type="InterPro" id="IPR055181">
    <property type="entry name" value="FGAR-AT_PurM_N-like"/>
</dbReference>
<dbReference type="InterPro" id="IPR010073">
    <property type="entry name" value="PurL_large"/>
</dbReference>
<dbReference type="InterPro" id="IPR041609">
    <property type="entry name" value="PurL_linker"/>
</dbReference>
<dbReference type="InterPro" id="IPR010918">
    <property type="entry name" value="PurM-like_C_dom"/>
</dbReference>
<dbReference type="InterPro" id="IPR036676">
    <property type="entry name" value="PurM-like_C_sf"/>
</dbReference>
<dbReference type="InterPro" id="IPR036921">
    <property type="entry name" value="PurM-like_N_sf"/>
</dbReference>
<dbReference type="InterPro" id="IPR036604">
    <property type="entry name" value="PurS-like_sf"/>
</dbReference>
<dbReference type="NCBIfam" id="TIGR01735">
    <property type="entry name" value="FGAM_synt"/>
    <property type="match status" value="1"/>
</dbReference>
<dbReference type="NCBIfam" id="NF003672">
    <property type="entry name" value="PRK05297.1"/>
    <property type="match status" value="1"/>
</dbReference>
<dbReference type="PANTHER" id="PTHR10099">
    <property type="entry name" value="PHOSPHORIBOSYLFORMYLGLYCINAMIDINE SYNTHASE"/>
    <property type="match status" value="1"/>
</dbReference>
<dbReference type="PANTHER" id="PTHR10099:SF1">
    <property type="entry name" value="PHOSPHORIBOSYLFORMYLGLYCINAMIDINE SYNTHASE"/>
    <property type="match status" value="1"/>
</dbReference>
<dbReference type="Pfam" id="PF02769">
    <property type="entry name" value="AIRS_C"/>
    <property type="match status" value="2"/>
</dbReference>
<dbReference type="Pfam" id="PF18072">
    <property type="entry name" value="FGAR-AT_linker"/>
    <property type="match status" value="1"/>
</dbReference>
<dbReference type="Pfam" id="PF18076">
    <property type="entry name" value="FGAR-AT_N"/>
    <property type="match status" value="1"/>
</dbReference>
<dbReference type="Pfam" id="PF22689">
    <property type="entry name" value="FGAR-AT_PurM_N-like"/>
    <property type="match status" value="1"/>
</dbReference>
<dbReference type="Pfam" id="PF13507">
    <property type="entry name" value="GATase_5"/>
    <property type="match status" value="1"/>
</dbReference>
<dbReference type="SMART" id="SM01211">
    <property type="entry name" value="GATase_5"/>
    <property type="match status" value="1"/>
</dbReference>
<dbReference type="SUPFAM" id="SSF52317">
    <property type="entry name" value="Class I glutamine amidotransferase-like"/>
    <property type="match status" value="1"/>
</dbReference>
<dbReference type="SUPFAM" id="SSF109736">
    <property type="entry name" value="FGAM synthase PurL, linker domain"/>
    <property type="match status" value="1"/>
</dbReference>
<dbReference type="SUPFAM" id="SSF56042">
    <property type="entry name" value="PurM C-terminal domain-like"/>
    <property type="match status" value="2"/>
</dbReference>
<dbReference type="SUPFAM" id="SSF55326">
    <property type="entry name" value="PurM N-terminal domain-like"/>
    <property type="match status" value="2"/>
</dbReference>
<dbReference type="SUPFAM" id="SSF82697">
    <property type="entry name" value="PurS-like"/>
    <property type="match status" value="1"/>
</dbReference>
<dbReference type="PROSITE" id="PS51273">
    <property type="entry name" value="GATASE_TYPE_1"/>
    <property type="match status" value="1"/>
</dbReference>
<gene>
    <name evidence="1" type="primary">purL</name>
    <name type="ordered locus">NGO_1183</name>
</gene>
<organism>
    <name type="scientific">Neisseria gonorrhoeae (strain ATCC 700825 / FA 1090)</name>
    <dbReference type="NCBI Taxonomy" id="242231"/>
    <lineage>
        <taxon>Bacteria</taxon>
        <taxon>Pseudomonadati</taxon>
        <taxon>Pseudomonadota</taxon>
        <taxon>Betaproteobacteria</taxon>
        <taxon>Neisseriales</taxon>
        <taxon>Neisseriaceae</taxon>
        <taxon>Neisseria</taxon>
    </lineage>
</organism>
<reference key="1">
    <citation type="submission" date="2003-03" db="EMBL/GenBank/DDBJ databases">
        <title>The complete genome sequence of Neisseria gonorrhoeae.</title>
        <authorList>
            <person name="Lewis L.A."/>
            <person name="Gillaspy A.F."/>
            <person name="McLaughlin R.E."/>
            <person name="Gipson M."/>
            <person name="Ducey T.F."/>
            <person name="Ownbey T."/>
            <person name="Hartman K."/>
            <person name="Nydick C."/>
            <person name="Carson M.B."/>
            <person name="Vaughn J."/>
            <person name="Thomson C."/>
            <person name="Song L."/>
            <person name="Lin S."/>
            <person name="Yuan X."/>
            <person name="Najar F."/>
            <person name="Zhan M."/>
            <person name="Ren Q."/>
            <person name="Zhu H."/>
            <person name="Qi S."/>
            <person name="Kenton S.M."/>
            <person name="Lai H."/>
            <person name="White J.D."/>
            <person name="Clifton S."/>
            <person name="Roe B.A."/>
            <person name="Dyer D.W."/>
        </authorList>
    </citation>
    <scope>NUCLEOTIDE SEQUENCE [LARGE SCALE GENOMIC DNA]</scope>
    <source>
        <strain>ATCC 700825 / FA 1090</strain>
    </source>
</reference>